<proteinExistence type="inferred from homology"/>
<accession>A3D5F1</accession>
<reference key="1">
    <citation type="submission" date="2007-02" db="EMBL/GenBank/DDBJ databases">
        <title>Complete sequence of chromosome of Shewanella baltica OS155.</title>
        <authorList>
            <consortium name="US DOE Joint Genome Institute"/>
            <person name="Copeland A."/>
            <person name="Lucas S."/>
            <person name="Lapidus A."/>
            <person name="Barry K."/>
            <person name="Detter J.C."/>
            <person name="Glavina del Rio T."/>
            <person name="Hammon N."/>
            <person name="Israni S."/>
            <person name="Dalin E."/>
            <person name="Tice H."/>
            <person name="Pitluck S."/>
            <person name="Sims D.R."/>
            <person name="Brettin T."/>
            <person name="Bruce D."/>
            <person name="Han C."/>
            <person name="Tapia R."/>
            <person name="Brainard J."/>
            <person name="Schmutz J."/>
            <person name="Larimer F."/>
            <person name="Land M."/>
            <person name="Hauser L."/>
            <person name="Kyrpides N."/>
            <person name="Mikhailova N."/>
            <person name="Brettar I."/>
            <person name="Klappenbach J."/>
            <person name="Konstantinidis K."/>
            <person name="Rodrigues J."/>
            <person name="Tiedje J."/>
            <person name="Richardson P."/>
        </authorList>
    </citation>
    <scope>NUCLEOTIDE SEQUENCE [LARGE SCALE GENOMIC DNA]</scope>
    <source>
        <strain>OS155 / ATCC BAA-1091</strain>
    </source>
</reference>
<feature type="chain" id="PRO_0000338916" description="Translation initiation factor IF-1">
    <location>
        <begin position="1"/>
        <end position="72"/>
    </location>
</feature>
<feature type="domain" description="S1-like" evidence="1">
    <location>
        <begin position="1"/>
        <end position="72"/>
    </location>
</feature>
<organism>
    <name type="scientific">Shewanella baltica (strain OS155 / ATCC BAA-1091)</name>
    <dbReference type="NCBI Taxonomy" id="325240"/>
    <lineage>
        <taxon>Bacteria</taxon>
        <taxon>Pseudomonadati</taxon>
        <taxon>Pseudomonadota</taxon>
        <taxon>Gammaproteobacteria</taxon>
        <taxon>Alteromonadales</taxon>
        <taxon>Shewanellaceae</taxon>
        <taxon>Shewanella</taxon>
    </lineage>
</organism>
<protein>
    <recommendedName>
        <fullName evidence="1">Translation initiation factor IF-1</fullName>
    </recommendedName>
</protein>
<gene>
    <name evidence="1" type="primary">infA</name>
    <name type="ordered locus">Sbal_2471</name>
</gene>
<sequence length="72" mass="8273">MAKEDNIEMQGTILETLPNTMFRVELENGHVVIAHISGKMRKNYIRILTGDKVTVQLTPYDLTKGRIVFRAR</sequence>
<name>IF1_SHEB5</name>
<dbReference type="EMBL" id="CP000563">
    <property type="protein sequence ID" value="ABN61964.1"/>
    <property type="molecule type" value="Genomic_DNA"/>
</dbReference>
<dbReference type="RefSeq" id="WP_006081934.1">
    <property type="nucleotide sequence ID" value="NC_009052.1"/>
</dbReference>
<dbReference type="SMR" id="A3D5F1"/>
<dbReference type="STRING" id="325240.Sbal_2471"/>
<dbReference type="GeneID" id="94727745"/>
<dbReference type="KEGG" id="sbl:Sbal_2471"/>
<dbReference type="HOGENOM" id="CLU_151267_1_0_6"/>
<dbReference type="OrthoDB" id="9803250at2"/>
<dbReference type="Proteomes" id="UP000001557">
    <property type="component" value="Chromosome"/>
</dbReference>
<dbReference type="GO" id="GO:0005829">
    <property type="term" value="C:cytosol"/>
    <property type="evidence" value="ECO:0007669"/>
    <property type="project" value="TreeGrafter"/>
</dbReference>
<dbReference type="GO" id="GO:0043022">
    <property type="term" value="F:ribosome binding"/>
    <property type="evidence" value="ECO:0007669"/>
    <property type="project" value="UniProtKB-UniRule"/>
</dbReference>
<dbReference type="GO" id="GO:0019843">
    <property type="term" value="F:rRNA binding"/>
    <property type="evidence" value="ECO:0007669"/>
    <property type="project" value="UniProtKB-UniRule"/>
</dbReference>
<dbReference type="GO" id="GO:0003743">
    <property type="term" value="F:translation initiation factor activity"/>
    <property type="evidence" value="ECO:0007669"/>
    <property type="project" value="UniProtKB-UniRule"/>
</dbReference>
<dbReference type="CDD" id="cd04451">
    <property type="entry name" value="S1_IF1"/>
    <property type="match status" value="1"/>
</dbReference>
<dbReference type="FunFam" id="2.40.50.140:FF:000002">
    <property type="entry name" value="Translation initiation factor IF-1"/>
    <property type="match status" value="1"/>
</dbReference>
<dbReference type="Gene3D" id="2.40.50.140">
    <property type="entry name" value="Nucleic acid-binding proteins"/>
    <property type="match status" value="1"/>
</dbReference>
<dbReference type="HAMAP" id="MF_00075">
    <property type="entry name" value="IF_1"/>
    <property type="match status" value="1"/>
</dbReference>
<dbReference type="InterPro" id="IPR012340">
    <property type="entry name" value="NA-bd_OB-fold"/>
</dbReference>
<dbReference type="InterPro" id="IPR006196">
    <property type="entry name" value="RNA-binding_domain_S1_IF1"/>
</dbReference>
<dbReference type="InterPro" id="IPR003029">
    <property type="entry name" value="S1_domain"/>
</dbReference>
<dbReference type="InterPro" id="IPR004368">
    <property type="entry name" value="TIF_IF1"/>
</dbReference>
<dbReference type="NCBIfam" id="TIGR00008">
    <property type="entry name" value="infA"/>
    <property type="match status" value="1"/>
</dbReference>
<dbReference type="PANTHER" id="PTHR33370">
    <property type="entry name" value="TRANSLATION INITIATION FACTOR IF-1, CHLOROPLASTIC"/>
    <property type="match status" value="1"/>
</dbReference>
<dbReference type="PANTHER" id="PTHR33370:SF1">
    <property type="entry name" value="TRANSLATION INITIATION FACTOR IF-1, CHLOROPLASTIC"/>
    <property type="match status" value="1"/>
</dbReference>
<dbReference type="Pfam" id="PF01176">
    <property type="entry name" value="eIF-1a"/>
    <property type="match status" value="1"/>
</dbReference>
<dbReference type="SMART" id="SM00316">
    <property type="entry name" value="S1"/>
    <property type="match status" value="1"/>
</dbReference>
<dbReference type="SUPFAM" id="SSF50249">
    <property type="entry name" value="Nucleic acid-binding proteins"/>
    <property type="match status" value="1"/>
</dbReference>
<dbReference type="PROSITE" id="PS50832">
    <property type="entry name" value="S1_IF1_TYPE"/>
    <property type="match status" value="1"/>
</dbReference>
<evidence type="ECO:0000255" key="1">
    <source>
        <dbReference type="HAMAP-Rule" id="MF_00075"/>
    </source>
</evidence>
<keyword id="KW-0963">Cytoplasm</keyword>
<keyword id="KW-0396">Initiation factor</keyword>
<keyword id="KW-0648">Protein biosynthesis</keyword>
<keyword id="KW-1185">Reference proteome</keyword>
<keyword id="KW-0694">RNA-binding</keyword>
<keyword id="KW-0699">rRNA-binding</keyword>
<comment type="function">
    <text evidence="1">One of the essential components for the initiation of protein synthesis. Stabilizes the binding of IF-2 and IF-3 on the 30S subunit to which N-formylmethionyl-tRNA(fMet) subsequently binds. Helps modulate mRNA selection, yielding the 30S pre-initiation complex (PIC). Upon addition of the 50S ribosomal subunit IF-1, IF-2 and IF-3 are released leaving the mature 70S translation initiation complex.</text>
</comment>
<comment type="subunit">
    <text evidence="1">Component of the 30S ribosomal translation pre-initiation complex which assembles on the 30S ribosome in the order IF-2 and IF-3, IF-1 and N-formylmethionyl-tRNA(fMet); mRNA recruitment can occur at any time during PIC assembly.</text>
</comment>
<comment type="subcellular location">
    <subcellularLocation>
        <location evidence="1">Cytoplasm</location>
    </subcellularLocation>
</comment>
<comment type="similarity">
    <text evidence="1">Belongs to the IF-1 family.</text>
</comment>